<name>BIG1_YEAST</name>
<sequence length="335" mass="39069">MQTVLKYLLLIMCGSFCASEELQNQTNVPAIFFSYKLTPGILKYQEDYDRAVTLPRDTFIEAAEKFLGVCNADTYVFINQPGLRKLDFLEFETEFVSLQRYIRRSSTAIKFEKVDLLPQDLYYDLAEFVKEYCNVDQVLNLRGNNTEDFQPFIDSEKRVIIIEYPKLPEDTNERKEAFRHYDKYLRTILAQIPSPEQNVIYTSLNPGTTLAHESIIPIQIFPDIFDIKSRVGEVEQNNRVLDVPRLSFNDYTPRFSEPPSEYVSIFDSQLIENNRGLLQLIFTILVGYILIQFFFTKKTIVDEKITNKKDNVKQTSPQLLKKVQEIQKKPSQQVS</sequence>
<keyword id="KW-0961">Cell wall biogenesis/degradation</keyword>
<keyword id="KW-0256">Endoplasmic reticulum</keyword>
<keyword id="KW-0325">Glycoprotein</keyword>
<keyword id="KW-0472">Membrane</keyword>
<keyword id="KW-1185">Reference proteome</keyword>
<keyword id="KW-0732">Signal</keyword>
<keyword id="KW-0812">Transmembrane</keyword>
<keyword id="KW-1133">Transmembrane helix</keyword>
<feature type="signal peptide" evidence="1">
    <location>
        <begin position="1"/>
        <end position="17"/>
    </location>
</feature>
<feature type="chain" id="PRO_0000014327" description="Protein BIG1">
    <location>
        <begin position="18"/>
        <end position="335"/>
    </location>
</feature>
<feature type="topological domain" description="Lumenal" evidence="1">
    <location>
        <begin position="20"/>
        <end position="275"/>
    </location>
</feature>
<feature type="transmembrane region" description="Helical" evidence="1">
    <location>
        <begin position="276"/>
        <end position="296"/>
    </location>
</feature>
<feature type="topological domain" description="Cytoplasmic" evidence="1">
    <location>
        <begin position="297"/>
        <end position="335"/>
    </location>
</feature>
<feature type="glycosylation site" description="N-linked (GlcNAc...) asparagine" evidence="1">
    <location>
        <position position="24"/>
    </location>
</feature>
<feature type="glycosylation site" description="N-linked (GlcNAc...) asparagine" evidence="1">
    <location>
        <position position="144"/>
    </location>
</feature>
<accession>P38813</accession>
<accession>D3DL51</accession>
<protein>
    <recommendedName>
        <fullName>Protein BIG1</fullName>
    </recommendedName>
    <alternativeName>
        <fullName>Bad in glucose protein 1</fullName>
    </alternativeName>
</protein>
<gene>
    <name type="primary">BIG1</name>
    <name type="ordered locus">YHR101C</name>
</gene>
<evidence type="ECO:0000255" key="1"/>
<evidence type="ECO:0000269" key="2">
    <source>
    </source>
</evidence>
<evidence type="ECO:0000269" key="3">
    <source>
    </source>
</evidence>
<evidence type="ECO:0000269" key="4">
    <source>
    </source>
</evidence>
<evidence type="ECO:0000269" key="5">
    <source>
    </source>
</evidence>
<evidence type="ECO:0000305" key="6"/>
<reference key="1">
    <citation type="journal article" date="1994" name="Science">
        <title>Complete nucleotide sequence of Saccharomyces cerevisiae chromosome VIII.</title>
        <authorList>
            <person name="Johnston M."/>
            <person name="Andrews S."/>
            <person name="Brinkman R."/>
            <person name="Cooper J."/>
            <person name="Ding H."/>
            <person name="Dover J."/>
            <person name="Du Z."/>
            <person name="Favello A."/>
            <person name="Fulton L."/>
            <person name="Gattung S."/>
            <person name="Geisel C."/>
            <person name="Kirsten J."/>
            <person name="Kucaba T."/>
            <person name="Hillier L.W."/>
            <person name="Jier M."/>
            <person name="Johnston L."/>
            <person name="Langston Y."/>
            <person name="Latreille P."/>
            <person name="Louis E.J."/>
            <person name="Macri C."/>
            <person name="Mardis E."/>
            <person name="Menezes S."/>
            <person name="Mouser L."/>
            <person name="Nhan M."/>
            <person name="Rifkin L."/>
            <person name="Riles L."/>
            <person name="St Peter H."/>
            <person name="Trevaskis E."/>
            <person name="Vaughan K."/>
            <person name="Vignati D."/>
            <person name="Wilcox L."/>
            <person name="Wohldman P."/>
            <person name="Waterston R."/>
            <person name="Wilson R."/>
            <person name="Vaudin M."/>
        </authorList>
    </citation>
    <scope>NUCLEOTIDE SEQUENCE [LARGE SCALE GENOMIC DNA]</scope>
    <source>
        <strain>ATCC 204508 / S288c</strain>
    </source>
</reference>
<reference key="2">
    <citation type="journal article" date="2014" name="G3 (Bethesda)">
        <title>The reference genome sequence of Saccharomyces cerevisiae: Then and now.</title>
        <authorList>
            <person name="Engel S.R."/>
            <person name="Dietrich F.S."/>
            <person name="Fisk D.G."/>
            <person name="Binkley G."/>
            <person name="Balakrishnan R."/>
            <person name="Costanzo M.C."/>
            <person name="Dwight S.S."/>
            <person name="Hitz B.C."/>
            <person name="Karra K."/>
            <person name="Nash R.S."/>
            <person name="Weng S."/>
            <person name="Wong E.D."/>
            <person name="Lloyd P."/>
            <person name="Skrzypek M.S."/>
            <person name="Miyasato S.R."/>
            <person name="Simison M."/>
            <person name="Cherry J.M."/>
        </authorList>
    </citation>
    <scope>GENOME REANNOTATION</scope>
    <source>
        <strain>ATCC 204508 / S288c</strain>
    </source>
</reference>
<reference key="3">
    <citation type="journal article" date="1998" name="EMBO J.">
        <title>Cell wall integrity modulates RHO1 activity via the exchange factor ROM2.</title>
        <authorList>
            <person name="Bickle M."/>
            <person name="Delley P.-A."/>
            <person name="Schmidt A."/>
            <person name="Hall M.N."/>
        </authorList>
    </citation>
    <scope>FUNCTION</scope>
</reference>
<reference key="4">
    <citation type="journal article" date="2002" name="Yeast">
        <title>Saccharomyces cerevisiae Big1p, a putative endoplasmic reticulum membrane protein required for normal levels of cell wall beta-1,6-glucan.</title>
        <authorList>
            <person name="Azuma M."/>
            <person name="Levinson J.N."/>
            <person name="Page N."/>
            <person name="Bussey H."/>
        </authorList>
    </citation>
    <scope>FUNCTION</scope>
    <scope>SUBCELLULAR LOCATION</scope>
    <scope>GLYCOSYLATION</scope>
</reference>
<reference key="5">
    <citation type="journal article" date="2003" name="Nature">
        <title>Global analysis of protein localization in budding yeast.</title>
        <authorList>
            <person name="Huh W.-K."/>
            <person name="Falvo J.V."/>
            <person name="Gerke L.C."/>
            <person name="Carroll A.S."/>
            <person name="Howson R.W."/>
            <person name="Weissman J.S."/>
            <person name="O'Shea E.K."/>
        </authorList>
    </citation>
    <scope>SUBCELLULAR LOCATION [LARGE SCALE ANALYSIS]</scope>
</reference>
<reference key="6">
    <citation type="journal article" date="2003" name="Nature">
        <title>Global analysis of protein expression in yeast.</title>
        <authorList>
            <person name="Ghaemmaghami S."/>
            <person name="Huh W.-K."/>
            <person name="Bower K."/>
            <person name="Howson R.W."/>
            <person name="Belle A."/>
            <person name="Dephoure N."/>
            <person name="O'Shea E.K."/>
            <person name="Weissman J.S."/>
        </authorList>
    </citation>
    <scope>LEVEL OF PROTEIN EXPRESSION [LARGE SCALE ANALYSIS]</scope>
</reference>
<organism>
    <name type="scientific">Saccharomyces cerevisiae (strain ATCC 204508 / S288c)</name>
    <name type="common">Baker's yeast</name>
    <dbReference type="NCBI Taxonomy" id="559292"/>
    <lineage>
        <taxon>Eukaryota</taxon>
        <taxon>Fungi</taxon>
        <taxon>Dikarya</taxon>
        <taxon>Ascomycota</taxon>
        <taxon>Saccharomycotina</taxon>
        <taxon>Saccharomycetes</taxon>
        <taxon>Saccharomycetales</taxon>
        <taxon>Saccharomycetaceae</taxon>
        <taxon>Saccharomyces</taxon>
    </lineage>
</organism>
<dbReference type="EMBL" id="U00059">
    <property type="protein sequence ID" value="AAB68861.1"/>
    <property type="molecule type" value="Genomic_DNA"/>
</dbReference>
<dbReference type="EMBL" id="BK006934">
    <property type="protein sequence ID" value="DAA06795.1"/>
    <property type="molecule type" value="Genomic_DNA"/>
</dbReference>
<dbReference type="PIR" id="S48965">
    <property type="entry name" value="S48965"/>
</dbReference>
<dbReference type="RefSeq" id="NP_011969.1">
    <property type="nucleotide sequence ID" value="NM_001179231.1"/>
</dbReference>
<dbReference type="BioGRID" id="36534">
    <property type="interactions" value="278"/>
</dbReference>
<dbReference type="FunCoup" id="P38813">
    <property type="interactions" value="38"/>
</dbReference>
<dbReference type="IntAct" id="P38813">
    <property type="interactions" value="1"/>
</dbReference>
<dbReference type="STRING" id="4932.YHR101C"/>
<dbReference type="GlyCosmos" id="P38813">
    <property type="glycosylation" value="2 sites, No reported glycans"/>
</dbReference>
<dbReference type="GlyGen" id="P38813">
    <property type="glycosylation" value="2 sites"/>
</dbReference>
<dbReference type="iPTMnet" id="P38813"/>
<dbReference type="PaxDb" id="4932-YHR101C"/>
<dbReference type="PeptideAtlas" id="P38813"/>
<dbReference type="EnsemblFungi" id="YHR101C_mRNA">
    <property type="protein sequence ID" value="YHR101C"/>
    <property type="gene ID" value="YHR101C"/>
</dbReference>
<dbReference type="GeneID" id="856501"/>
<dbReference type="KEGG" id="sce:YHR101C"/>
<dbReference type="AGR" id="SGD:S000001143"/>
<dbReference type="SGD" id="S000001143">
    <property type="gene designation" value="BIG1"/>
</dbReference>
<dbReference type="VEuPathDB" id="FungiDB:YHR101C"/>
<dbReference type="eggNOG" id="ENOG502RXHV">
    <property type="taxonomic scope" value="Eukaryota"/>
</dbReference>
<dbReference type="HOGENOM" id="CLU_067894_0_0_1"/>
<dbReference type="InParanoid" id="P38813"/>
<dbReference type="OMA" id="PNWNPIR"/>
<dbReference type="OrthoDB" id="9985059at2759"/>
<dbReference type="BioCyc" id="YEAST:G3O-31146-MONOMER"/>
<dbReference type="BioGRID-ORCS" id="856501">
    <property type="hits" value="0 hits in 10 CRISPR screens"/>
</dbReference>
<dbReference type="PRO" id="PR:P38813"/>
<dbReference type="Proteomes" id="UP000002311">
    <property type="component" value="Chromosome VIII"/>
</dbReference>
<dbReference type="RNAct" id="P38813">
    <property type="molecule type" value="protein"/>
</dbReference>
<dbReference type="GO" id="GO:0005783">
    <property type="term" value="C:endoplasmic reticulum"/>
    <property type="evidence" value="ECO:0007005"/>
    <property type="project" value="SGD"/>
</dbReference>
<dbReference type="GO" id="GO:0005789">
    <property type="term" value="C:endoplasmic reticulum membrane"/>
    <property type="evidence" value="ECO:0000314"/>
    <property type="project" value="SGD"/>
</dbReference>
<dbReference type="GO" id="GO:0006078">
    <property type="term" value="P:(1-&gt;6)-beta-D-glucan biosynthetic process"/>
    <property type="evidence" value="ECO:0000315"/>
    <property type="project" value="SGD"/>
</dbReference>
<dbReference type="GO" id="GO:0071555">
    <property type="term" value="P:cell wall organization"/>
    <property type="evidence" value="ECO:0007669"/>
    <property type="project" value="UniProtKB-KW"/>
</dbReference>
<dbReference type="GO" id="GO:0070072">
    <property type="term" value="P:vacuolar proton-transporting V-type ATPase complex assembly"/>
    <property type="evidence" value="ECO:0000315"/>
    <property type="project" value="SGD"/>
</dbReference>
<dbReference type="InterPro" id="IPR037654">
    <property type="entry name" value="Big1"/>
</dbReference>
<dbReference type="PANTHER" id="PTHR28285">
    <property type="entry name" value="PROTEIN BIG1"/>
    <property type="match status" value="1"/>
</dbReference>
<dbReference type="PANTHER" id="PTHR28285:SF1">
    <property type="entry name" value="PROTEIN BIG1"/>
    <property type="match status" value="1"/>
</dbReference>
<proteinExistence type="evidence at protein level"/>
<comment type="function">
    <text evidence="2 5">Required for normal beta-1,6-glucan synthesis.</text>
</comment>
<comment type="subcellular location">
    <subcellularLocation>
        <location evidence="2 3">Endoplasmic reticulum membrane</location>
        <topology evidence="2 3">Single-pass type I membrane protein</topology>
    </subcellularLocation>
</comment>
<comment type="PTM">
    <text evidence="2">N-glycosylated.</text>
</comment>
<comment type="miscellaneous">
    <text evidence="4">Present with 3460 molecules/cell in log phase SD medium.</text>
</comment>
<comment type="similarity">
    <text evidence="6">Belongs to the BIG1 family.</text>
</comment>